<dbReference type="EMBL" id="U92572">
    <property type="protein sequence ID" value="AAB68680.2"/>
    <property type="molecule type" value="Genomic_DNA"/>
</dbReference>
<dbReference type="EMBL" id="DQ481667">
    <property type="protein sequence ID" value="ABF22444.1"/>
    <property type="molecule type" value="Genomic_DNA"/>
</dbReference>
<dbReference type="RefSeq" id="XP_003963115.1">
    <property type="nucleotide sequence ID" value="XM_003963066.2"/>
</dbReference>
<dbReference type="BMRB" id="O42502"/>
<dbReference type="SMR" id="O42502"/>
<dbReference type="FunCoup" id="O42502">
    <property type="interactions" value="99"/>
</dbReference>
<dbReference type="Ensembl" id="ENSTRUT00000068749.1">
    <property type="protein sequence ID" value="ENSTRUP00000074956.1"/>
    <property type="gene ID" value="ENSTRUG00000003727.3"/>
</dbReference>
<dbReference type="GeneID" id="101078902"/>
<dbReference type="KEGG" id="tru:101078902"/>
<dbReference type="CTD" id="58043"/>
<dbReference type="GeneTree" id="ENSGT00940000160866"/>
<dbReference type="HOGENOM" id="CLU_071854_2_0_1"/>
<dbReference type="InParanoid" id="O42502"/>
<dbReference type="OrthoDB" id="6159439at2759"/>
<dbReference type="Proteomes" id="UP000005226">
    <property type="component" value="Chromosome 3"/>
</dbReference>
<dbReference type="GO" id="GO:0005634">
    <property type="term" value="C:nucleus"/>
    <property type="evidence" value="ECO:0007669"/>
    <property type="project" value="UniProtKB-SubCell"/>
</dbReference>
<dbReference type="GO" id="GO:0000981">
    <property type="term" value="F:DNA-binding transcription factor activity, RNA polymerase II-specific"/>
    <property type="evidence" value="ECO:0007669"/>
    <property type="project" value="InterPro"/>
</dbReference>
<dbReference type="GO" id="GO:0000978">
    <property type="term" value="F:RNA polymerase II cis-regulatory region sequence-specific DNA binding"/>
    <property type="evidence" value="ECO:0007669"/>
    <property type="project" value="TreeGrafter"/>
</dbReference>
<dbReference type="GO" id="GO:0009952">
    <property type="term" value="P:anterior/posterior pattern specification"/>
    <property type="evidence" value="ECO:0007669"/>
    <property type="project" value="TreeGrafter"/>
</dbReference>
<dbReference type="GO" id="GO:0006351">
    <property type="term" value="P:DNA-templated transcription"/>
    <property type="evidence" value="ECO:0007669"/>
    <property type="project" value="InterPro"/>
</dbReference>
<dbReference type="GO" id="GO:0048704">
    <property type="term" value="P:embryonic skeletal system morphogenesis"/>
    <property type="evidence" value="ECO:0007669"/>
    <property type="project" value="TreeGrafter"/>
</dbReference>
<dbReference type="GO" id="GO:0009954">
    <property type="term" value="P:proximal/distal pattern formation"/>
    <property type="evidence" value="ECO:0007669"/>
    <property type="project" value="TreeGrafter"/>
</dbReference>
<dbReference type="CDD" id="cd00086">
    <property type="entry name" value="homeodomain"/>
    <property type="match status" value="1"/>
</dbReference>
<dbReference type="FunFam" id="1.10.10.60:FF:000018">
    <property type="entry name" value="Homeobox A10"/>
    <property type="match status" value="1"/>
</dbReference>
<dbReference type="Gene3D" id="1.10.10.60">
    <property type="entry name" value="Homeodomain-like"/>
    <property type="match status" value="1"/>
</dbReference>
<dbReference type="InterPro" id="IPR050803">
    <property type="entry name" value="Abd-B_homeobox_TF"/>
</dbReference>
<dbReference type="InterPro" id="IPR001356">
    <property type="entry name" value="HD"/>
</dbReference>
<dbReference type="InterPro" id="IPR020479">
    <property type="entry name" value="HD_metazoa"/>
</dbReference>
<dbReference type="InterPro" id="IPR017970">
    <property type="entry name" value="Homeobox_CS"/>
</dbReference>
<dbReference type="InterPro" id="IPR009057">
    <property type="entry name" value="Homeodomain-like_sf"/>
</dbReference>
<dbReference type="InterPro" id="IPR006711">
    <property type="entry name" value="Hox9_activation_N"/>
</dbReference>
<dbReference type="InterPro" id="IPR017112">
    <property type="entry name" value="HXA9/HXB9/HXC9"/>
</dbReference>
<dbReference type="PANTHER" id="PTHR45970">
    <property type="entry name" value="AGAP004664-PA"/>
    <property type="match status" value="1"/>
</dbReference>
<dbReference type="PANTHER" id="PTHR45970:SF1">
    <property type="entry name" value="HOMEOBOX PROTEIN HOX-C9"/>
    <property type="match status" value="1"/>
</dbReference>
<dbReference type="Pfam" id="PF00046">
    <property type="entry name" value="Homeodomain"/>
    <property type="match status" value="1"/>
</dbReference>
<dbReference type="Pfam" id="PF04617">
    <property type="entry name" value="Hox9_act"/>
    <property type="match status" value="1"/>
</dbReference>
<dbReference type="PIRSF" id="PIRSF037109">
    <property type="entry name" value="Homeobox_Hox9"/>
    <property type="match status" value="1"/>
</dbReference>
<dbReference type="PRINTS" id="PR00024">
    <property type="entry name" value="HOMEOBOX"/>
</dbReference>
<dbReference type="SMART" id="SM00389">
    <property type="entry name" value="HOX"/>
    <property type="match status" value="1"/>
</dbReference>
<dbReference type="SUPFAM" id="SSF46689">
    <property type="entry name" value="Homeodomain-like"/>
    <property type="match status" value="1"/>
</dbReference>
<dbReference type="PROSITE" id="PS00027">
    <property type="entry name" value="HOMEOBOX_1"/>
    <property type="match status" value="1"/>
</dbReference>
<dbReference type="PROSITE" id="PS50071">
    <property type="entry name" value="HOMEOBOX_2"/>
    <property type="match status" value="1"/>
</dbReference>
<proteinExistence type="inferred from homology"/>
<gene>
    <name type="primary">hoxc9a</name>
    <name type="synonym">hoxc9</name>
</gene>
<reference key="1">
    <citation type="journal article" date="1997" name="Nat. Genet.">
        <title>Organization of the Fugu rubripes Hox clusters: evidence for continuing evolution of vertebrate Hox complexes.</title>
        <authorList>
            <person name="Aparicio S.J."/>
            <person name="Hawker K."/>
            <person name="Cottage A."/>
            <person name="Mikawa Y."/>
            <person name="Zuo L."/>
            <person name="Venkatesh B."/>
            <person name="Chen E."/>
            <person name="Krumlauf R."/>
            <person name="Brenner S."/>
        </authorList>
    </citation>
    <scope>NUCLEOTIDE SEQUENCE [GENOMIC DNA]</scope>
</reference>
<reference key="2">
    <citation type="submission" date="2000-08" db="EMBL/GenBank/DDBJ databases">
        <authorList>
            <person name="Aparicio S.J."/>
        </authorList>
    </citation>
    <scope>SEQUENCE REVISION</scope>
</reference>
<reference key="3">
    <citation type="journal article" date="2006" name="Proc. Natl. Acad. Sci. U.S.A.">
        <title>Highly conserved syntenic blocks at the vertebrate Hox loci and conserved regulatory elements within and outside Hox gene clusters.</title>
        <authorList>
            <person name="Lee A.P."/>
            <person name="Koh E.G.L."/>
            <person name="Tay A."/>
            <person name="Brenner S."/>
            <person name="Venkatesh B."/>
        </authorList>
    </citation>
    <scope>NUCLEOTIDE SEQUENCE [GENOMIC DNA]</scope>
</reference>
<organism>
    <name type="scientific">Takifugu rubripes</name>
    <name type="common">Japanese pufferfish</name>
    <name type="synonym">Fugu rubripes</name>
    <dbReference type="NCBI Taxonomy" id="31033"/>
    <lineage>
        <taxon>Eukaryota</taxon>
        <taxon>Metazoa</taxon>
        <taxon>Chordata</taxon>
        <taxon>Craniata</taxon>
        <taxon>Vertebrata</taxon>
        <taxon>Euteleostomi</taxon>
        <taxon>Actinopterygii</taxon>
        <taxon>Neopterygii</taxon>
        <taxon>Teleostei</taxon>
        <taxon>Neoteleostei</taxon>
        <taxon>Acanthomorphata</taxon>
        <taxon>Eupercaria</taxon>
        <taxon>Tetraodontiformes</taxon>
        <taxon>Tetradontoidea</taxon>
        <taxon>Tetraodontidae</taxon>
        <taxon>Takifugu</taxon>
    </lineage>
</organism>
<sequence>MSTTGPITNYYVDSLINHENEDVLAAARFSAQGSHPAGPRTTSLVPECADFPSCSFAPKAPVFSTSWAPMHTQPSVGYHPYSHQPHLATDSRYMRSWLEPISGAVPFHGYPGNGRHYGLKPDAFQEHRAGDCLGSTGRTYADYLYCTADIRDKTHQNIPSPEPELVASGKHKDEKPELDPNNPVANWIHARSTRKKRCPYTKYQTLELEKEFLFNMYLTRDRRFEVARVLNLTERQVKIWFQNRRMKMKKMNKEKNDSKEQ</sequence>
<evidence type="ECO:0000250" key="1"/>
<evidence type="ECO:0000255" key="2">
    <source>
        <dbReference type="PROSITE-ProRule" id="PRU00108"/>
    </source>
</evidence>
<evidence type="ECO:0000256" key="3">
    <source>
        <dbReference type="SAM" id="MobiDB-lite"/>
    </source>
</evidence>
<evidence type="ECO:0000305" key="4"/>
<feature type="chain" id="PRO_0000200188" description="Homeobox protein Hox-C9a">
    <location>
        <begin position="1"/>
        <end position="261"/>
    </location>
</feature>
<feature type="DNA-binding region" description="Homeobox" evidence="2">
    <location>
        <begin position="193"/>
        <end position="252"/>
    </location>
</feature>
<feature type="region of interest" description="Disordered" evidence="3">
    <location>
        <begin position="156"/>
        <end position="182"/>
    </location>
</feature>
<accession>O42502</accession>
<accession>Q1KKV0</accession>
<protein>
    <recommendedName>
        <fullName>Homeobox protein Hox-C9a</fullName>
    </recommendedName>
    <alternativeName>
        <fullName>FrHOXC-9</fullName>
    </alternativeName>
</protein>
<name>HXC9A_TAKRU</name>
<keyword id="KW-0217">Developmental protein</keyword>
<keyword id="KW-0238">DNA-binding</keyword>
<keyword id="KW-0371">Homeobox</keyword>
<keyword id="KW-0539">Nucleus</keyword>
<keyword id="KW-1185">Reference proteome</keyword>
<keyword id="KW-0804">Transcription</keyword>
<keyword id="KW-0805">Transcription regulation</keyword>
<comment type="function">
    <text evidence="1">Sequence-specific transcription factor which is part of a developmental regulatory system that provides cells with specific positional identities on the anterior-posterior axis.</text>
</comment>
<comment type="subcellular location">
    <subcellularLocation>
        <location evidence="2">Nucleus</location>
    </subcellularLocation>
</comment>
<comment type="similarity">
    <text evidence="4">Belongs to the Abd-B homeobox family.</text>
</comment>